<sequence>MESGGQYENGRYKPDYYKGTQSVNVMPKKEQHNALVMNKKIISILAERDAAVKERNEAVAATKEALASRDEALEQRDKALSERDNAIMETESALNALRYRENNLNYILSCAKRGGSQRFITEESHLPNPSPISTIPPEAANTRPTKRKKESKQGKKMGEDLNRPVASPGKKSRKDWDSNDVLVTFDEMTMPVPMCTCTGTARQCYKWGNGGWQSSCCTTTLSEYPLPQMPNKRHSRVGGRKMSGSVFSRLLSRLAGEGHELSSPVDLKNYWARHGTNRYITIK</sequence>
<feature type="chain" id="PRO_0000413439" description="Protein BASIC PENTACYSTEINE5">
    <location>
        <begin position="1"/>
        <end position="283"/>
    </location>
</feature>
<feature type="region of interest" description="Alanine-zipper">
    <location>
        <begin position="51"/>
        <end position="86"/>
    </location>
</feature>
<feature type="region of interest" description="Disordered" evidence="3">
    <location>
        <begin position="122"/>
        <end position="176"/>
    </location>
</feature>
<feature type="coiled-coil region" evidence="2">
    <location>
        <begin position="63"/>
        <end position="89"/>
    </location>
</feature>
<feature type="compositionally biased region" description="Basic and acidic residues" evidence="3">
    <location>
        <begin position="151"/>
        <end position="162"/>
    </location>
</feature>
<feature type="splice variant" id="VSP_041899" description="In isoform 2." evidence="5 6">
    <location>
        <begin position="1"/>
        <end position="25"/>
    </location>
</feature>
<feature type="sequence variant" description="In strain: cv. Ak-1.">
    <original>G</original>
    <variation>D</variation>
    <location>
        <position position="114"/>
    </location>
</feature>
<feature type="sequence variant" description="In strain: cv. Ak-1; cv. Bay-0 and cv. Landsberg erecta.">
    <original>M</original>
    <variation>T</variation>
    <location>
        <position position="188"/>
    </location>
</feature>
<feature type="sequence variant" description="In strain: cv. Bay-0.">
    <original>T</original>
    <variation>A</variation>
    <location>
        <position position="196"/>
    </location>
</feature>
<feature type="sequence conflict" description="In Ref. 5; BX827792." evidence="7" ref="5">
    <original>K</original>
    <variation>E</variation>
    <location>
        <position position="29"/>
    </location>
</feature>
<feature type="sequence conflict" description="In Ref. 5; BX827792." evidence="7" ref="5">
    <original>C</original>
    <variation>F</variation>
    <location>
        <position position="204"/>
    </location>
</feature>
<organism>
    <name type="scientific">Arabidopsis thaliana</name>
    <name type="common">Mouse-ear cress</name>
    <dbReference type="NCBI Taxonomy" id="3702"/>
    <lineage>
        <taxon>Eukaryota</taxon>
        <taxon>Viridiplantae</taxon>
        <taxon>Streptophyta</taxon>
        <taxon>Embryophyta</taxon>
        <taxon>Tracheophyta</taxon>
        <taxon>Spermatophyta</taxon>
        <taxon>Magnoliopsida</taxon>
        <taxon>eudicotyledons</taxon>
        <taxon>Gunneridae</taxon>
        <taxon>Pentapetalae</taxon>
        <taxon>rosids</taxon>
        <taxon>malvids</taxon>
        <taxon>Brassicales</taxon>
        <taxon>Brassicaceae</taxon>
        <taxon>Camelineae</taxon>
        <taxon>Arabidopsis</taxon>
    </lineage>
</organism>
<gene>
    <name type="primary">BPC5</name>
    <name type="synonym">BBR/BPC5</name>
    <name type="ordered locus">At4g38910</name>
    <name type="ORF">F19H22.10</name>
</gene>
<proteinExistence type="evidence at protein level"/>
<keyword id="KW-0025">Alternative splicing</keyword>
<keyword id="KW-0175">Coiled coil</keyword>
<keyword id="KW-0238">DNA-binding</keyword>
<keyword id="KW-0539">Nucleus</keyword>
<keyword id="KW-1185">Reference proteome</keyword>
<keyword id="KW-0804">Transcription</keyword>
<keyword id="KW-0805">Transcription regulation</keyword>
<name>BPC5_ARATH</name>
<evidence type="ECO:0000250" key="1"/>
<evidence type="ECO:0000255" key="2"/>
<evidence type="ECO:0000256" key="3">
    <source>
        <dbReference type="SAM" id="MobiDB-lite"/>
    </source>
</evidence>
<evidence type="ECO:0000269" key="4">
    <source>
    </source>
</evidence>
<evidence type="ECO:0000303" key="5">
    <source>
    </source>
</evidence>
<evidence type="ECO:0000303" key="6">
    <source>
    </source>
</evidence>
<evidence type="ECO:0000305" key="7"/>
<reference key="1">
    <citation type="journal article" date="2003" name="Plant J.">
        <title>The GA octodinucleotide repeat binding factor BBR participates in the transcriptional regulation of the homeobox gene Bkn3.</title>
        <authorList>
            <person name="Santi L."/>
            <person name="Wang Y."/>
            <person name="Stile M.R."/>
            <person name="Berendzen K.W."/>
            <person name="Wanke D."/>
            <person name="Roig C."/>
            <person name="Pozzi C."/>
            <person name="Mueller K."/>
            <person name="Mueller J."/>
            <person name="Rohde W."/>
            <person name="Salamini F."/>
        </authorList>
    </citation>
    <scope>NUCLEOTIDE SEQUENCE [GENOMIC DNA] (ISOFORM 1)</scope>
    <source>
        <strain>cv. Ak-1</strain>
        <strain>cv. Bay-0</strain>
    </source>
</reference>
<reference key="2">
    <citation type="journal article" date="2004" name="Plant J.">
        <title>Definition and interactions of a positive regulatory element of the Arabidopsis INNER NO OUTER promoter.</title>
        <authorList>
            <person name="Meister R.J."/>
            <person name="Williams L.A."/>
            <person name="Monfared M.M."/>
            <person name="Gallagher T.L."/>
            <person name="Kraft E.A."/>
            <person name="Nelson C.G."/>
            <person name="Gasser C.S."/>
        </authorList>
    </citation>
    <scope>NUCLEOTIDE SEQUENCE [MRNA] (ISOFORM 2)</scope>
    <scope>FUNCTION</scope>
    <scope>DNA-BINDING</scope>
    <scope>TISSUE SPECIFICITY</scope>
    <source>
        <strain>cv. Landsberg erecta</strain>
    </source>
</reference>
<reference key="3">
    <citation type="journal article" date="1999" name="Nature">
        <title>Sequence and analysis of chromosome 4 of the plant Arabidopsis thaliana.</title>
        <authorList>
            <person name="Mayer K.F.X."/>
            <person name="Schueller C."/>
            <person name="Wambutt R."/>
            <person name="Murphy G."/>
            <person name="Volckaert G."/>
            <person name="Pohl T."/>
            <person name="Duesterhoeft A."/>
            <person name="Stiekema W."/>
            <person name="Entian K.-D."/>
            <person name="Terryn N."/>
            <person name="Harris B."/>
            <person name="Ansorge W."/>
            <person name="Brandt P."/>
            <person name="Grivell L.A."/>
            <person name="Rieger M."/>
            <person name="Weichselgartner M."/>
            <person name="de Simone V."/>
            <person name="Obermaier B."/>
            <person name="Mache R."/>
            <person name="Mueller M."/>
            <person name="Kreis M."/>
            <person name="Delseny M."/>
            <person name="Puigdomenech P."/>
            <person name="Watson M."/>
            <person name="Schmidtheini T."/>
            <person name="Reichert B."/>
            <person name="Portetelle D."/>
            <person name="Perez-Alonso M."/>
            <person name="Boutry M."/>
            <person name="Bancroft I."/>
            <person name="Vos P."/>
            <person name="Hoheisel J."/>
            <person name="Zimmermann W."/>
            <person name="Wedler H."/>
            <person name="Ridley P."/>
            <person name="Langham S.-A."/>
            <person name="McCullagh B."/>
            <person name="Bilham L."/>
            <person name="Robben J."/>
            <person name="van der Schueren J."/>
            <person name="Grymonprez B."/>
            <person name="Chuang Y.-J."/>
            <person name="Vandenbussche F."/>
            <person name="Braeken M."/>
            <person name="Weltjens I."/>
            <person name="Voet M."/>
            <person name="Bastiaens I."/>
            <person name="Aert R."/>
            <person name="Defoor E."/>
            <person name="Weitzenegger T."/>
            <person name="Bothe G."/>
            <person name="Ramsperger U."/>
            <person name="Hilbert H."/>
            <person name="Braun M."/>
            <person name="Holzer E."/>
            <person name="Brandt A."/>
            <person name="Peters S."/>
            <person name="van Staveren M."/>
            <person name="Dirkse W."/>
            <person name="Mooijman P."/>
            <person name="Klein Lankhorst R."/>
            <person name="Rose M."/>
            <person name="Hauf J."/>
            <person name="Koetter P."/>
            <person name="Berneiser S."/>
            <person name="Hempel S."/>
            <person name="Feldpausch M."/>
            <person name="Lamberth S."/>
            <person name="Van den Daele H."/>
            <person name="De Keyser A."/>
            <person name="Buysshaert C."/>
            <person name="Gielen J."/>
            <person name="Villarroel R."/>
            <person name="De Clercq R."/>
            <person name="van Montagu M."/>
            <person name="Rogers J."/>
            <person name="Cronin A."/>
            <person name="Quail M.A."/>
            <person name="Bray-Allen S."/>
            <person name="Clark L."/>
            <person name="Doggett J."/>
            <person name="Hall S."/>
            <person name="Kay M."/>
            <person name="Lennard N."/>
            <person name="McLay K."/>
            <person name="Mayes R."/>
            <person name="Pettett A."/>
            <person name="Rajandream M.A."/>
            <person name="Lyne M."/>
            <person name="Benes V."/>
            <person name="Rechmann S."/>
            <person name="Borkova D."/>
            <person name="Bloecker H."/>
            <person name="Scharfe M."/>
            <person name="Grimm M."/>
            <person name="Loehnert T.-H."/>
            <person name="Dose S."/>
            <person name="de Haan M."/>
            <person name="Maarse A.C."/>
            <person name="Schaefer M."/>
            <person name="Mueller-Auer S."/>
            <person name="Gabel C."/>
            <person name="Fuchs M."/>
            <person name="Fartmann B."/>
            <person name="Granderath K."/>
            <person name="Dauner D."/>
            <person name="Herzl A."/>
            <person name="Neumann S."/>
            <person name="Argiriou A."/>
            <person name="Vitale D."/>
            <person name="Liguori R."/>
            <person name="Piravandi E."/>
            <person name="Massenet O."/>
            <person name="Quigley F."/>
            <person name="Clabauld G."/>
            <person name="Muendlein A."/>
            <person name="Felber R."/>
            <person name="Schnabl S."/>
            <person name="Hiller R."/>
            <person name="Schmidt W."/>
            <person name="Lecharny A."/>
            <person name="Aubourg S."/>
            <person name="Chefdor F."/>
            <person name="Cooke R."/>
            <person name="Berger C."/>
            <person name="Monfort A."/>
            <person name="Casacuberta E."/>
            <person name="Gibbons T."/>
            <person name="Weber N."/>
            <person name="Vandenbol M."/>
            <person name="Bargues M."/>
            <person name="Terol J."/>
            <person name="Torres A."/>
            <person name="Perez-Perez A."/>
            <person name="Purnelle B."/>
            <person name="Bent E."/>
            <person name="Johnson S."/>
            <person name="Tacon D."/>
            <person name="Jesse T."/>
            <person name="Heijnen L."/>
            <person name="Schwarz S."/>
            <person name="Scholler P."/>
            <person name="Heber S."/>
            <person name="Francs P."/>
            <person name="Bielke C."/>
            <person name="Frishman D."/>
            <person name="Haase D."/>
            <person name="Lemcke K."/>
            <person name="Mewes H.-W."/>
            <person name="Stocker S."/>
            <person name="Zaccaria P."/>
            <person name="Bevan M."/>
            <person name="Wilson R.K."/>
            <person name="de la Bastide M."/>
            <person name="Habermann K."/>
            <person name="Parnell L."/>
            <person name="Dedhia N."/>
            <person name="Gnoj L."/>
            <person name="Schutz K."/>
            <person name="Huang E."/>
            <person name="Spiegel L."/>
            <person name="Sekhon M."/>
            <person name="Murray J."/>
            <person name="Sheet P."/>
            <person name="Cordes M."/>
            <person name="Abu-Threideh J."/>
            <person name="Stoneking T."/>
            <person name="Kalicki J."/>
            <person name="Graves T."/>
            <person name="Harmon G."/>
            <person name="Edwards J."/>
            <person name="Latreille P."/>
            <person name="Courtney L."/>
            <person name="Cloud J."/>
            <person name="Abbott A."/>
            <person name="Scott K."/>
            <person name="Johnson D."/>
            <person name="Minx P."/>
            <person name="Bentley D."/>
            <person name="Fulton B."/>
            <person name="Miller N."/>
            <person name="Greco T."/>
            <person name="Kemp K."/>
            <person name="Kramer J."/>
            <person name="Fulton L."/>
            <person name="Mardis E."/>
            <person name="Dante M."/>
            <person name="Pepin K."/>
            <person name="Hillier L.W."/>
            <person name="Nelson J."/>
            <person name="Spieth J."/>
            <person name="Ryan E."/>
            <person name="Andrews S."/>
            <person name="Geisel C."/>
            <person name="Layman D."/>
            <person name="Du H."/>
            <person name="Ali J."/>
            <person name="Berghoff A."/>
            <person name="Jones K."/>
            <person name="Drone K."/>
            <person name="Cotton M."/>
            <person name="Joshu C."/>
            <person name="Antonoiu B."/>
            <person name="Zidanic M."/>
            <person name="Strong C."/>
            <person name="Sun H."/>
            <person name="Lamar B."/>
            <person name="Yordan C."/>
            <person name="Ma P."/>
            <person name="Zhong J."/>
            <person name="Preston R."/>
            <person name="Vil D."/>
            <person name="Shekher M."/>
            <person name="Matero A."/>
            <person name="Shah R."/>
            <person name="Swaby I.K."/>
            <person name="O'Shaughnessy A."/>
            <person name="Rodriguez M."/>
            <person name="Hoffman J."/>
            <person name="Till S."/>
            <person name="Granat S."/>
            <person name="Shohdy N."/>
            <person name="Hasegawa A."/>
            <person name="Hameed A."/>
            <person name="Lodhi M."/>
            <person name="Johnson A."/>
            <person name="Chen E."/>
            <person name="Marra M.A."/>
            <person name="Martienssen R."/>
            <person name="McCombie W.R."/>
        </authorList>
    </citation>
    <scope>NUCLEOTIDE SEQUENCE [LARGE SCALE GENOMIC DNA]</scope>
    <source>
        <strain>cv. Columbia</strain>
    </source>
</reference>
<reference key="4">
    <citation type="journal article" date="2017" name="Plant J.">
        <title>Araport11: a complete reannotation of the Arabidopsis thaliana reference genome.</title>
        <authorList>
            <person name="Cheng C.Y."/>
            <person name="Krishnakumar V."/>
            <person name="Chan A.P."/>
            <person name="Thibaud-Nissen F."/>
            <person name="Schobel S."/>
            <person name="Town C.D."/>
        </authorList>
    </citation>
    <scope>GENOME REANNOTATION</scope>
    <source>
        <strain>cv. Columbia</strain>
    </source>
</reference>
<reference key="5">
    <citation type="journal article" date="2004" name="Genome Res.">
        <title>Whole genome sequence comparisons and 'full-length' cDNA sequences: a combined approach to evaluate and improve Arabidopsis genome annotation.</title>
        <authorList>
            <person name="Castelli V."/>
            <person name="Aury J.-M."/>
            <person name="Jaillon O."/>
            <person name="Wincker P."/>
            <person name="Clepet C."/>
            <person name="Menard M."/>
            <person name="Cruaud C."/>
            <person name="Quetier F."/>
            <person name="Scarpelli C."/>
            <person name="Schaechter V."/>
            <person name="Temple G."/>
            <person name="Caboche M."/>
            <person name="Weissenbach J."/>
            <person name="Salanoubat M."/>
        </authorList>
    </citation>
    <scope>NUCLEOTIDE SEQUENCE [LARGE SCALE MRNA] (ISOFORM 2)</scope>
    <source>
        <strain>cv. Columbia</strain>
    </source>
</reference>
<reference key="6">
    <citation type="book" date="2009" name="Proceedings of the 20th international conference on Arabidopsis research">
        <title>The plant specific BPC/BBR family of GAGA-repeat binding proteins.</title>
        <authorList>
            <person name="Bloss U."/>
            <person name="Hohenstatt M.L."/>
            <person name="Hummel S."/>
            <person name="Harter K."/>
            <person name="Wanke D."/>
        </authorList>
    </citation>
    <scope>GENE FAMILY</scope>
</reference>
<accession>F4JUI3</accession>
<accession>E6Y2M5</accession>
<accession>E6Y2M6</accession>
<accession>F4JUI4</accession>
<accession>Q9SVK1</accession>
<protein>
    <recommendedName>
        <fullName>Protein BASIC PENTACYSTEINE5</fullName>
        <shortName>AtBPC5</shortName>
    </recommendedName>
    <alternativeName>
        <fullName>GAGA-motif binding transcriptional activator BBR/BPC5</fullName>
    </alternativeName>
</protein>
<dbReference type="EMBL" id="EF633604">
    <property type="protein sequence ID" value="ABU63289.1"/>
    <property type="status" value="ALT_INIT"/>
    <property type="molecule type" value="Genomic_DNA"/>
</dbReference>
<dbReference type="EMBL" id="EF633605">
    <property type="protein sequence ID" value="ABU63290.1"/>
    <property type="status" value="ALT_INIT"/>
    <property type="molecule type" value="Genomic_DNA"/>
</dbReference>
<dbReference type="EMBL" id="AY380571">
    <property type="status" value="NOT_ANNOTATED_CDS"/>
    <property type="molecule type" value="mRNA"/>
</dbReference>
<dbReference type="EMBL" id="AL035679">
    <property type="protein sequence ID" value="CAB38811.1"/>
    <property type="status" value="ALT_SEQ"/>
    <property type="molecule type" value="Genomic_DNA"/>
</dbReference>
<dbReference type="EMBL" id="AL161594">
    <property type="protein sequence ID" value="CAB80554.1"/>
    <property type="status" value="ALT_SEQ"/>
    <property type="molecule type" value="Genomic_DNA"/>
</dbReference>
<dbReference type="EMBL" id="CP002687">
    <property type="protein sequence ID" value="AEE86991.1"/>
    <property type="molecule type" value="Genomic_DNA"/>
</dbReference>
<dbReference type="EMBL" id="CP002687">
    <property type="protein sequence ID" value="AEE86992.1"/>
    <property type="molecule type" value="Genomic_DNA"/>
</dbReference>
<dbReference type="EMBL" id="BX827792">
    <property type="status" value="NOT_ANNOTATED_CDS"/>
    <property type="molecule type" value="mRNA"/>
</dbReference>
<dbReference type="PIR" id="T06051">
    <property type="entry name" value="T06051"/>
</dbReference>
<dbReference type="RefSeq" id="NP_001190957.1">
    <molecule id="F4JUI3-1"/>
    <property type="nucleotide sequence ID" value="NM_001204028.2"/>
</dbReference>
<dbReference type="RefSeq" id="NP_195602.5">
    <molecule id="F4JUI3-2"/>
    <property type="nucleotide sequence ID" value="NM_120051.6"/>
</dbReference>
<dbReference type="SMR" id="F4JUI3"/>
<dbReference type="BioGRID" id="15326">
    <property type="interactions" value="7"/>
</dbReference>
<dbReference type="FunCoup" id="F4JUI3">
    <property type="interactions" value="141"/>
</dbReference>
<dbReference type="IntAct" id="F4JUI3">
    <property type="interactions" value="7"/>
</dbReference>
<dbReference type="STRING" id="3702.F4JUI3"/>
<dbReference type="PaxDb" id="3702-AT4G38910.2"/>
<dbReference type="ProteomicsDB" id="240807">
    <molecule id="F4JUI3-1"/>
</dbReference>
<dbReference type="EnsemblPlants" id="AT4G38910.1">
    <molecule id="F4JUI3-2"/>
    <property type="protein sequence ID" value="AT4G38910.1"/>
    <property type="gene ID" value="AT4G38910"/>
</dbReference>
<dbReference type="EnsemblPlants" id="AT4G38910.2">
    <molecule id="F4JUI3-1"/>
    <property type="protein sequence ID" value="AT4G38910.2"/>
    <property type="gene ID" value="AT4G38910"/>
</dbReference>
<dbReference type="GeneID" id="830046"/>
<dbReference type="Gramene" id="AT4G38910.1">
    <molecule id="F4JUI3-2"/>
    <property type="protein sequence ID" value="AT4G38910.1"/>
    <property type="gene ID" value="AT4G38910"/>
</dbReference>
<dbReference type="Gramene" id="AT4G38910.2">
    <molecule id="F4JUI3-1"/>
    <property type="protein sequence ID" value="AT4G38910.2"/>
    <property type="gene ID" value="AT4G38910"/>
</dbReference>
<dbReference type="KEGG" id="ath:AT4G38910"/>
<dbReference type="Araport" id="AT4G38910"/>
<dbReference type="TAIR" id="AT4G38910">
    <property type="gene designation" value="BPC5"/>
</dbReference>
<dbReference type="eggNOG" id="ENOG502R48X">
    <property type="taxonomic scope" value="Eukaryota"/>
</dbReference>
<dbReference type="InParanoid" id="F4JUI3"/>
<dbReference type="OMA" id="QAKCAKG"/>
<dbReference type="PRO" id="PR:F4JUI3"/>
<dbReference type="Proteomes" id="UP000006548">
    <property type="component" value="Chromosome 4"/>
</dbReference>
<dbReference type="ExpressionAtlas" id="F4JUI3">
    <property type="expression patterns" value="baseline and differential"/>
</dbReference>
<dbReference type="GO" id="GO:0005634">
    <property type="term" value="C:nucleus"/>
    <property type="evidence" value="ECO:0000314"/>
    <property type="project" value="TAIR"/>
</dbReference>
<dbReference type="GO" id="GO:0003677">
    <property type="term" value="F:DNA binding"/>
    <property type="evidence" value="ECO:0000314"/>
    <property type="project" value="TAIR"/>
</dbReference>
<dbReference type="InterPro" id="IPR010409">
    <property type="entry name" value="GAGA-bd_tscrpt_act"/>
</dbReference>
<dbReference type="PANTHER" id="PTHR31421">
    <property type="entry name" value="PROTEIN BASIC PENTACYSTEINE3"/>
    <property type="match status" value="1"/>
</dbReference>
<dbReference type="PANTHER" id="PTHR31421:SF7">
    <property type="entry name" value="PROTEIN BASIC PENTACYSTEINE5"/>
    <property type="match status" value="1"/>
</dbReference>
<dbReference type="Pfam" id="PF06217">
    <property type="entry name" value="GAGA_bind"/>
    <property type="match status" value="1"/>
</dbReference>
<dbReference type="SMART" id="SM01226">
    <property type="entry name" value="GAGA_bind"/>
    <property type="match status" value="1"/>
</dbReference>
<comment type="function">
    <text evidence="4">Transcriptional regulator that specifically binds to GA-rich elements (GAGA-repeats) present in regulatory sequences of genes involved in developmental processes.</text>
</comment>
<comment type="subunit">
    <text evidence="1">Homodimer. Heterodimer.</text>
</comment>
<comment type="interaction">
    <interactant intactId="EBI-15194873">
        <id>F4JUI3</id>
    </interactant>
    <interactant intactId="EBI-15196639">
        <id>Q8L999-2</id>
        <label>BPC6</label>
    </interactant>
    <organismsDiffer>false</organismsDiffer>
    <experiments>3</experiments>
</comment>
<comment type="subcellular location">
    <subcellularLocation>
        <location evidence="1">Nucleus</location>
    </subcellularLocation>
</comment>
<comment type="alternative products">
    <event type="alternative splicing"/>
    <isoform>
        <id>F4JUI3-1</id>
        <name>1</name>
        <sequence type="displayed"/>
    </isoform>
    <isoform>
        <id>F4JUI3-2</id>
        <name>2</name>
        <sequence type="described" ref="VSP_041899"/>
    </isoform>
</comment>
<comment type="tissue specificity">
    <text evidence="4">Expressed in seedlings, leaves and pistils.</text>
</comment>
<comment type="domain">
    <text>Alanine-zipper domain is involved in homo- or hetero-dimerization via electrostatic interaction.</text>
</comment>
<comment type="miscellaneous">
    <molecule>Isoform 2</molecule>
    <text evidence="7">May be due to a competing acceptor splice site.</text>
</comment>
<comment type="similarity">
    <text evidence="7">Belongs to the BBR/BPC family.</text>
</comment>
<comment type="sequence caution" evidence="7">
    <conflict type="erroneous initiation">
        <sequence resource="EMBL-CDS" id="ABU63289"/>
    </conflict>
    <text>Extended N-terminus.</text>
</comment>
<comment type="sequence caution" evidence="7">
    <conflict type="erroneous initiation">
        <sequence resource="EMBL-CDS" id="ABU63290"/>
    </conflict>
    <text>Extended N-terminus.</text>
</comment>
<comment type="sequence caution" evidence="7">
    <conflict type="erroneous gene model prediction">
        <sequence resource="EMBL-CDS" id="CAB38811"/>
    </conflict>
</comment>
<comment type="sequence caution" evidence="7">
    <conflict type="erroneous gene model prediction">
        <sequence resource="EMBL-CDS" id="CAB80554"/>
    </conflict>
</comment>